<accession>A8A8W3</accession>
<dbReference type="EMBL" id="CP000816">
    <property type="protein sequence ID" value="ABU81365.1"/>
    <property type="molecule type" value="Genomic_DNA"/>
</dbReference>
<dbReference type="RefSeq" id="WP_011998217.1">
    <property type="nucleotide sequence ID" value="NC_009776.1"/>
</dbReference>
<dbReference type="SMR" id="A8A8W3"/>
<dbReference type="STRING" id="453591.Igni_0181"/>
<dbReference type="GeneID" id="5562323"/>
<dbReference type="KEGG" id="iho:Igni_0181"/>
<dbReference type="eggNOG" id="arCOG04239">
    <property type="taxonomic scope" value="Archaea"/>
</dbReference>
<dbReference type="HOGENOM" id="CLU_089738_1_1_2"/>
<dbReference type="OrthoDB" id="10429at2157"/>
<dbReference type="PhylomeDB" id="A8A8W3"/>
<dbReference type="Proteomes" id="UP000000262">
    <property type="component" value="Chromosome"/>
</dbReference>
<dbReference type="GO" id="GO:0015935">
    <property type="term" value="C:small ribosomal subunit"/>
    <property type="evidence" value="ECO:0007669"/>
    <property type="project" value="InterPro"/>
</dbReference>
<dbReference type="GO" id="GO:0019843">
    <property type="term" value="F:rRNA binding"/>
    <property type="evidence" value="ECO:0007669"/>
    <property type="project" value="UniProtKB-UniRule"/>
</dbReference>
<dbReference type="GO" id="GO:0003735">
    <property type="term" value="F:structural constituent of ribosome"/>
    <property type="evidence" value="ECO:0007669"/>
    <property type="project" value="InterPro"/>
</dbReference>
<dbReference type="GO" id="GO:0042274">
    <property type="term" value="P:ribosomal small subunit biogenesis"/>
    <property type="evidence" value="ECO:0007669"/>
    <property type="project" value="TreeGrafter"/>
</dbReference>
<dbReference type="GO" id="GO:0006412">
    <property type="term" value="P:translation"/>
    <property type="evidence" value="ECO:0007669"/>
    <property type="project" value="UniProtKB-UniRule"/>
</dbReference>
<dbReference type="CDD" id="cd00165">
    <property type="entry name" value="S4"/>
    <property type="match status" value="1"/>
</dbReference>
<dbReference type="Gene3D" id="3.10.290.10">
    <property type="entry name" value="RNA-binding S4 domain"/>
    <property type="match status" value="1"/>
</dbReference>
<dbReference type="HAMAP" id="MF_01306_A">
    <property type="entry name" value="Ribosomal_uS4_A"/>
    <property type="match status" value="1"/>
</dbReference>
<dbReference type="InterPro" id="IPR022801">
    <property type="entry name" value="Ribosomal_uS4"/>
</dbReference>
<dbReference type="InterPro" id="IPR022802">
    <property type="entry name" value="Ribosomal_uS4_arc"/>
</dbReference>
<dbReference type="InterPro" id="IPR018079">
    <property type="entry name" value="Ribosomal_uS4_CS"/>
</dbReference>
<dbReference type="InterPro" id="IPR005710">
    <property type="entry name" value="Ribosomal_uS4_euk/arc"/>
</dbReference>
<dbReference type="InterPro" id="IPR001912">
    <property type="entry name" value="Ribosomal_uS4_N"/>
</dbReference>
<dbReference type="InterPro" id="IPR002942">
    <property type="entry name" value="S4_RNA-bd"/>
</dbReference>
<dbReference type="InterPro" id="IPR036986">
    <property type="entry name" value="S4_RNA-bd_sf"/>
</dbReference>
<dbReference type="NCBIfam" id="NF003139">
    <property type="entry name" value="PRK04051.1"/>
    <property type="match status" value="1"/>
</dbReference>
<dbReference type="NCBIfam" id="TIGR01018">
    <property type="entry name" value="uS4_arch"/>
    <property type="match status" value="1"/>
</dbReference>
<dbReference type="PANTHER" id="PTHR11831">
    <property type="entry name" value="30S 40S RIBOSOMAL PROTEIN"/>
    <property type="match status" value="1"/>
</dbReference>
<dbReference type="PANTHER" id="PTHR11831:SF5">
    <property type="entry name" value="40S RIBOSOMAL PROTEIN S9"/>
    <property type="match status" value="1"/>
</dbReference>
<dbReference type="Pfam" id="PF00163">
    <property type="entry name" value="Ribosomal_S4"/>
    <property type="match status" value="1"/>
</dbReference>
<dbReference type="Pfam" id="PF01479">
    <property type="entry name" value="S4"/>
    <property type="match status" value="1"/>
</dbReference>
<dbReference type="SMART" id="SM01390">
    <property type="entry name" value="Ribosomal_S4"/>
    <property type="match status" value="1"/>
</dbReference>
<dbReference type="SMART" id="SM00363">
    <property type="entry name" value="S4"/>
    <property type="match status" value="1"/>
</dbReference>
<dbReference type="SUPFAM" id="SSF55174">
    <property type="entry name" value="Alpha-L RNA-binding motif"/>
    <property type="match status" value="1"/>
</dbReference>
<dbReference type="PROSITE" id="PS00632">
    <property type="entry name" value="RIBOSOMAL_S4"/>
    <property type="match status" value="1"/>
</dbReference>
<dbReference type="PROSITE" id="PS50889">
    <property type="entry name" value="S4"/>
    <property type="match status" value="1"/>
</dbReference>
<sequence>MGDPRKPRKKWSPPGHPWVKERLIEEMKLMGEYGLRNKREIWIAAAMLRRYRHRARELLALPAEVREKEEKALLKRLYDLGLVDENATLDDVLSLTVRDLLERRLQTVVYKKGLAKSIYHARQLVTHGHIAINGRRVTSPGYIVRRDEEELIGYAPTSPYFKKAQQ</sequence>
<feature type="chain" id="PRO_0000322354" description="Small ribosomal subunit protein uS4">
    <location>
        <begin position="1"/>
        <end position="166"/>
    </location>
</feature>
<feature type="domain" description="S4 RNA-binding" evidence="1">
    <location>
        <begin position="103"/>
        <end position="165"/>
    </location>
</feature>
<evidence type="ECO:0000255" key="1">
    <source>
        <dbReference type="HAMAP-Rule" id="MF_01306"/>
    </source>
</evidence>
<evidence type="ECO:0000305" key="2"/>
<keyword id="KW-1185">Reference proteome</keyword>
<keyword id="KW-0687">Ribonucleoprotein</keyword>
<keyword id="KW-0689">Ribosomal protein</keyword>
<keyword id="KW-0694">RNA-binding</keyword>
<keyword id="KW-0699">rRNA-binding</keyword>
<proteinExistence type="inferred from homology"/>
<organism>
    <name type="scientific">Ignicoccus hospitalis (strain KIN4/I / DSM 18386 / JCM 14125)</name>
    <dbReference type="NCBI Taxonomy" id="453591"/>
    <lineage>
        <taxon>Archaea</taxon>
        <taxon>Thermoproteota</taxon>
        <taxon>Thermoprotei</taxon>
        <taxon>Desulfurococcales</taxon>
        <taxon>Desulfurococcaceae</taxon>
        <taxon>Ignicoccus</taxon>
    </lineage>
</organism>
<reference key="1">
    <citation type="journal article" date="2008" name="Genome Biol.">
        <title>A genomic analysis of the archaeal system Ignicoccus hospitalis-Nanoarchaeum equitans.</title>
        <authorList>
            <person name="Podar M."/>
            <person name="Anderson I."/>
            <person name="Makarova K.S."/>
            <person name="Elkins J.G."/>
            <person name="Ivanova N."/>
            <person name="Wall M.A."/>
            <person name="Lykidis A."/>
            <person name="Mavromatis K."/>
            <person name="Sun H."/>
            <person name="Hudson M.E."/>
            <person name="Chen W."/>
            <person name="Deciu C."/>
            <person name="Hutchison D."/>
            <person name="Eads J.R."/>
            <person name="Anderson A."/>
            <person name="Fernandes F."/>
            <person name="Szeto E."/>
            <person name="Lapidus A."/>
            <person name="Kyrpides N.C."/>
            <person name="Saier M.H. Jr."/>
            <person name="Richardson P.M."/>
            <person name="Rachel R."/>
            <person name="Huber H."/>
            <person name="Eisen J.A."/>
            <person name="Koonin E.V."/>
            <person name="Keller M."/>
            <person name="Stetter K.O."/>
        </authorList>
    </citation>
    <scope>NUCLEOTIDE SEQUENCE [LARGE SCALE GENOMIC DNA]</scope>
    <source>
        <strain>KIN4/I / DSM 18386 / JCM 14125</strain>
    </source>
</reference>
<protein>
    <recommendedName>
        <fullName evidence="1">Small ribosomal subunit protein uS4</fullName>
    </recommendedName>
    <alternativeName>
        <fullName evidence="2">30S ribosomal protein S4</fullName>
    </alternativeName>
</protein>
<gene>
    <name evidence="1" type="primary">rps4</name>
    <name type="ordered locus">Igni_0181</name>
</gene>
<comment type="function">
    <text evidence="1">One of the primary rRNA binding proteins, it binds directly to 16S rRNA where it nucleates assembly of the body of the 30S subunit.</text>
</comment>
<comment type="function">
    <text evidence="1">With S5 and S12 plays an important role in translational accuracy.</text>
</comment>
<comment type="subunit">
    <text evidence="1">Part of the 30S ribosomal subunit. Contacts protein S5. The interaction surface between S4 and S5 is involved in control of translational fidelity.</text>
</comment>
<comment type="similarity">
    <text evidence="1">Belongs to the universal ribosomal protein uS4 family.</text>
</comment>
<name>RS4_IGNH4</name>